<comment type="function">
    <text evidence="1">Plays a role in transcriptional regulation as a repressor that inhibits monoamine oxidase A (MAOA) activity and gene expression by binding to the promoter. Plays an important oncogenic role in mediating the full transforming effect of MYC in medulloblastoma cells. Involved in apoptotic signaling pathways; May act downstream of P38-kinase and BCL-2, but upstream of CASP3/caspase-3 as well as CCND1/cyclin D1 and E2F1 (By similarity).</text>
</comment>
<comment type="subunit">
    <text evidence="3">Interacts with MYC (By similarity). Interacts (via IBM motifs) with PSIP1 (via IBD domain); phosphorylation increases its affinity for PSIP1 (By similarity).</text>
</comment>
<comment type="subcellular location">
    <subcellularLocation>
        <location evidence="1">Cytoplasm</location>
    </subcellularLocation>
    <subcellularLocation>
        <location evidence="1">Nucleus</location>
    </subcellularLocation>
    <text evidence="1">Associates with chromatin. Translocates from cytoplasm to nucleus under dexamethasone induction (By similarity).</text>
</comment>
<comment type="PTM">
    <text evidence="3">Phosphorylation increases its interaction with PSIP1.</text>
</comment>
<accession>Q4G059</accession>
<sequence>MELATRSQIPKEVADIFNAPSDDEEFVGFQDDVPMENLSESCGSLDSLELEKQNACLHSKYFTEELRRIFKEDTDSDNEDFEGFTESELNIGSNPELIESELSDGDKTHPMMSDEEDDDDEEEAAPRRGRQSTRSSFGLRVAFQFPTKKTAKTPDKNSPHLLGGKTDLRREKSCRQPKEKEDSASDAEDESRAESQETSDALLKRAMNIKENKAMLAQLLAELNSVPDFFPVRTPPSASRRRTPRRAFSEGQITRRVNPTRSARPPEKFALENFTFSATKLTEELYSFRRRKTISGGKCQKYRRHRISSFRSVKDITEEELENIAITVRDKVYDKVLGNTCHQCRQKTIDTKTVCRNQGCGGVRGQFCGPCLRNRYGEDVRTALLDPKWTCPPCRGICNCSYCRRRDGRCATGILIHLAKFYGYDNVKEYLESLQKQL</sequence>
<organism>
    <name type="scientific">Rattus norvegicus</name>
    <name type="common">Rat</name>
    <dbReference type="NCBI Taxonomy" id="10116"/>
    <lineage>
        <taxon>Eukaryota</taxon>
        <taxon>Metazoa</taxon>
        <taxon>Chordata</taxon>
        <taxon>Craniata</taxon>
        <taxon>Vertebrata</taxon>
        <taxon>Euteleostomi</taxon>
        <taxon>Mammalia</taxon>
        <taxon>Eutheria</taxon>
        <taxon>Euarchontoglires</taxon>
        <taxon>Glires</taxon>
        <taxon>Rodentia</taxon>
        <taxon>Myomorpha</taxon>
        <taxon>Muroidea</taxon>
        <taxon>Muridae</taxon>
        <taxon>Murinae</taxon>
        <taxon>Rattus</taxon>
    </lineage>
</organism>
<name>CDA7L_RAT</name>
<feature type="chain" id="PRO_0000249315" description="Cell division cycle-associated 7-like protein">
    <location>
        <begin position="1"/>
        <end position="438"/>
    </location>
</feature>
<feature type="region of interest" description="PSIP1-binding" evidence="1">
    <location>
        <begin position="55"/>
        <end position="114"/>
    </location>
</feature>
<feature type="region of interest" description="Disordered" evidence="4">
    <location>
        <begin position="72"/>
        <end position="199"/>
    </location>
</feature>
<feature type="region of interest" description="MYC-binding" evidence="1">
    <location>
        <begin position="201"/>
        <end position="223"/>
    </location>
</feature>
<feature type="short sequence motif" description="Integrase domain-binding motif 1 (IBM1)" evidence="3">
    <location>
        <begin position="9"/>
        <end position="33"/>
    </location>
</feature>
<feature type="short sequence motif" description="Integrase domain-binding motif 2 (IBM2)" evidence="3">
    <location>
        <begin position="62"/>
        <end position="88"/>
    </location>
</feature>
<feature type="compositionally biased region" description="Acidic residues" evidence="4">
    <location>
        <begin position="74"/>
        <end position="85"/>
    </location>
</feature>
<feature type="compositionally biased region" description="Acidic residues" evidence="4">
    <location>
        <begin position="113"/>
        <end position="123"/>
    </location>
</feature>
<feature type="compositionally biased region" description="Basic and acidic residues" evidence="4">
    <location>
        <begin position="166"/>
        <end position="183"/>
    </location>
</feature>
<feature type="modified residue" description="Phosphoserine" evidence="3">
    <location>
        <position position="21"/>
    </location>
</feature>
<feature type="modified residue" description="Phosphothreonine" evidence="3">
    <location>
        <position position="74"/>
    </location>
</feature>
<feature type="modified residue" description="Phosphoserine" evidence="3">
    <location>
        <position position="76"/>
    </location>
</feature>
<feature type="modified residue" description="Phosphothreonine" evidence="3">
    <location>
        <position position="85"/>
    </location>
</feature>
<feature type="modified residue" description="Phosphoserine" evidence="3">
    <location>
        <position position="100"/>
    </location>
</feature>
<feature type="modified residue" description="Phosphoserine" evidence="3">
    <location>
        <position position="103"/>
    </location>
</feature>
<feature type="modified residue" description="Phosphoserine" evidence="5">
    <location>
        <position position="113"/>
    </location>
</feature>
<feature type="modified residue" description="Phosphoserine" evidence="3">
    <location>
        <position position="135"/>
    </location>
</feature>
<feature type="modified residue" description="Phosphoserine" evidence="3">
    <location>
        <position position="136"/>
    </location>
</feature>
<feature type="modified residue" description="Phosphoserine" evidence="2">
    <location>
        <position position="183"/>
    </location>
</feature>
<feature type="modified residue" description="Phosphoserine" evidence="2">
    <location>
        <position position="185"/>
    </location>
</feature>
<feature type="modified residue" description="Phosphoserine" evidence="3">
    <location>
        <position position="249"/>
    </location>
</feature>
<feature type="cross-link" description="Glycyl lysine isopeptide (Lys-Gly) (interchain with G-Cter in SUMO2)" evidence="3">
    <location>
        <position position="210"/>
    </location>
</feature>
<feature type="cross-link" description="Glycyl lysine isopeptide (Lys-Gly) (interchain with G-Cter in SUMO2)" evidence="3">
    <location>
        <position position="213"/>
    </location>
</feature>
<keyword id="KW-0963">Cytoplasm</keyword>
<keyword id="KW-1017">Isopeptide bond</keyword>
<keyword id="KW-0539">Nucleus</keyword>
<keyword id="KW-0597">Phosphoprotein</keyword>
<keyword id="KW-1185">Reference proteome</keyword>
<keyword id="KW-0678">Repressor</keyword>
<keyword id="KW-0804">Transcription</keyword>
<keyword id="KW-0805">Transcription regulation</keyword>
<keyword id="KW-0832">Ubl conjugation</keyword>
<gene>
    <name type="primary">Cdca7l</name>
</gene>
<dbReference type="EMBL" id="BC098734">
    <property type="protein sequence ID" value="AAH98734.1"/>
    <property type="molecule type" value="mRNA"/>
</dbReference>
<dbReference type="RefSeq" id="NP_001030125.1">
    <property type="nucleotide sequence ID" value="NM_001034953.1"/>
</dbReference>
<dbReference type="SMR" id="Q4G059"/>
<dbReference type="FunCoup" id="Q4G059">
    <property type="interactions" value="750"/>
</dbReference>
<dbReference type="STRING" id="10116.ENSRNOP00000061054"/>
<dbReference type="iPTMnet" id="Q4G059"/>
<dbReference type="PhosphoSitePlus" id="Q4G059"/>
<dbReference type="PaxDb" id="10116-ENSRNOP00000061054"/>
<dbReference type="Ensembl" id="ENSRNOT00000064868.3">
    <property type="protein sequence ID" value="ENSRNOP00000061054.1"/>
    <property type="gene ID" value="ENSRNOG00000005410.7"/>
</dbReference>
<dbReference type="GeneID" id="619566"/>
<dbReference type="KEGG" id="rno:619566"/>
<dbReference type="UCSC" id="RGD:1564080">
    <property type="organism name" value="rat"/>
</dbReference>
<dbReference type="AGR" id="RGD:1564080"/>
<dbReference type="CTD" id="55536"/>
<dbReference type="RGD" id="1564080">
    <property type="gene designation" value="Cdca7l"/>
</dbReference>
<dbReference type="eggNOG" id="ENOG502QWH1">
    <property type="taxonomic scope" value="Eukaryota"/>
</dbReference>
<dbReference type="GeneTree" id="ENSGT00940000159108"/>
<dbReference type="HOGENOM" id="CLU_035988_0_0_1"/>
<dbReference type="InParanoid" id="Q4G059"/>
<dbReference type="OrthoDB" id="66578at9989"/>
<dbReference type="PhylomeDB" id="Q4G059"/>
<dbReference type="TreeFam" id="TF101076"/>
<dbReference type="PRO" id="PR:Q4G059"/>
<dbReference type="Proteomes" id="UP000002494">
    <property type="component" value="Chromosome 6"/>
</dbReference>
<dbReference type="Bgee" id="ENSRNOG00000005410">
    <property type="expression patterns" value="Expressed in thymus and 18 other cell types or tissues"/>
</dbReference>
<dbReference type="ExpressionAtlas" id="Q4G059">
    <property type="expression patterns" value="baseline and differential"/>
</dbReference>
<dbReference type="GO" id="GO:0005829">
    <property type="term" value="C:cytosol"/>
    <property type="evidence" value="ECO:0007669"/>
    <property type="project" value="Ensembl"/>
</dbReference>
<dbReference type="GO" id="GO:0001650">
    <property type="term" value="C:fibrillar center"/>
    <property type="evidence" value="ECO:0007669"/>
    <property type="project" value="Ensembl"/>
</dbReference>
<dbReference type="GO" id="GO:0005654">
    <property type="term" value="C:nucleoplasm"/>
    <property type="evidence" value="ECO:0007669"/>
    <property type="project" value="Ensembl"/>
</dbReference>
<dbReference type="GO" id="GO:0005634">
    <property type="term" value="C:nucleus"/>
    <property type="evidence" value="ECO:0000266"/>
    <property type="project" value="RGD"/>
</dbReference>
<dbReference type="GO" id="GO:0008284">
    <property type="term" value="P:positive regulation of cell population proliferation"/>
    <property type="evidence" value="ECO:0000266"/>
    <property type="project" value="RGD"/>
</dbReference>
<dbReference type="GO" id="GO:0006355">
    <property type="term" value="P:regulation of DNA-templated transcription"/>
    <property type="evidence" value="ECO:0007669"/>
    <property type="project" value="InterPro"/>
</dbReference>
<dbReference type="InterPro" id="IPR040221">
    <property type="entry name" value="CDCA7/CDA7L"/>
</dbReference>
<dbReference type="InterPro" id="IPR018866">
    <property type="entry name" value="Znf-4CXXC_R1"/>
</dbReference>
<dbReference type="PANTHER" id="PTHR31169:SF4">
    <property type="entry name" value="CELL DIVISION CYCLE-ASSOCIATED 7-LIKE PROTEIN"/>
    <property type="match status" value="1"/>
</dbReference>
<dbReference type="PANTHER" id="PTHR31169">
    <property type="entry name" value="OS05G0300700 PROTEIN"/>
    <property type="match status" value="1"/>
</dbReference>
<dbReference type="Pfam" id="PF10497">
    <property type="entry name" value="zf-4CXXC_R1"/>
    <property type="match status" value="1"/>
</dbReference>
<evidence type="ECO:0000250" key="1"/>
<evidence type="ECO:0000250" key="2">
    <source>
        <dbReference type="UniProtKB" id="Q922M5"/>
    </source>
</evidence>
<evidence type="ECO:0000250" key="3">
    <source>
        <dbReference type="UniProtKB" id="Q96GN5"/>
    </source>
</evidence>
<evidence type="ECO:0000256" key="4">
    <source>
        <dbReference type="SAM" id="MobiDB-lite"/>
    </source>
</evidence>
<evidence type="ECO:0007744" key="5">
    <source>
    </source>
</evidence>
<protein>
    <recommendedName>
        <fullName>Cell division cycle-associated 7-like protein</fullName>
    </recommendedName>
</protein>
<reference key="1">
    <citation type="journal article" date="2004" name="Genome Res.">
        <title>The status, quality, and expansion of the NIH full-length cDNA project: the Mammalian Gene Collection (MGC).</title>
        <authorList>
            <consortium name="The MGC Project Team"/>
        </authorList>
    </citation>
    <scope>NUCLEOTIDE SEQUENCE [LARGE SCALE MRNA]</scope>
    <source>
        <tissue>Thymus</tissue>
    </source>
</reference>
<reference key="2">
    <citation type="journal article" date="2012" name="Nat. Commun.">
        <title>Quantitative maps of protein phosphorylation sites across 14 different rat organs and tissues.</title>
        <authorList>
            <person name="Lundby A."/>
            <person name="Secher A."/>
            <person name="Lage K."/>
            <person name="Nordsborg N.B."/>
            <person name="Dmytriyev A."/>
            <person name="Lundby C."/>
            <person name="Olsen J.V."/>
        </authorList>
    </citation>
    <scope>PHOSPHORYLATION [LARGE SCALE ANALYSIS] AT SER-113</scope>
    <scope>IDENTIFICATION BY MASS SPECTROMETRY [LARGE SCALE ANALYSIS]</scope>
</reference>
<proteinExistence type="evidence at protein level"/>